<gene>
    <name evidence="1" type="primary">argS</name>
    <name type="ordered locus">Cthe_1935</name>
</gene>
<evidence type="ECO:0000255" key="1">
    <source>
        <dbReference type="HAMAP-Rule" id="MF_00123"/>
    </source>
</evidence>
<proteinExistence type="inferred from homology"/>
<sequence>MTNVVETIKKQINEVVKNSISKAVQNGELPQFTVDELFIEIPKEKGHGDFSTNIAMQAAKTVRKAPRQVAEIIIKNMDLSNTYIDRVEAAGPGFINFFLTNAWLYDVLKVIQKEKENYGNLDIGRGQKVMVEFVSANPTGPLHMGNARGGALGDCIASVLEKAGYDVTREFYINDAGNQIEKFGISLEARYIQLLKGEDAVEFPEDGYHGEDIIDHMKAYIEENGDNLLYVDSEERRKTLVEYALPKNIERIRKSLENYGVVFDVWFSEQSLYDNGEVRETLDILKEKGYTFEKDGAVWFKASALGAEKDEVIVRNNGIPTYFAADIAYHRNKFLKRKFDRVINLLGADHHGHAARMKCALKAFDIDPDKLDIVIFQLVRLYRNGEIARMSKRTGRAISLDDLLEEVGRDAARFFFNTKASGSHLDFDLDLAVKKSNENPVYYVQYAYARSCSMLRLLESEGFKVPDVDSVDLTVLKAPEEIELMKKLSEYPEEIRISAQTLEPSRLTRYVLDVASNFHSFYNACRVKGEEENLMYARMILVDSTRLVIKNVLDVLSITAPEKM</sequence>
<dbReference type="EC" id="6.1.1.19" evidence="1"/>
<dbReference type="EMBL" id="CP000568">
    <property type="protein sequence ID" value="ABN53153.1"/>
    <property type="molecule type" value="Genomic_DNA"/>
</dbReference>
<dbReference type="RefSeq" id="WP_003513911.1">
    <property type="nucleotide sequence ID" value="NC_009012.1"/>
</dbReference>
<dbReference type="SMR" id="A3DGS4"/>
<dbReference type="STRING" id="203119.Cthe_1935"/>
<dbReference type="GeneID" id="35806233"/>
<dbReference type="KEGG" id="cth:Cthe_1935"/>
<dbReference type="eggNOG" id="COG0018">
    <property type="taxonomic scope" value="Bacteria"/>
</dbReference>
<dbReference type="HOGENOM" id="CLU_006406_0_1_9"/>
<dbReference type="OrthoDB" id="9805987at2"/>
<dbReference type="Proteomes" id="UP000002145">
    <property type="component" value="Chromosome"/>
</dbReference>
<dbReference type="GO" id="GO:0005737">
    <property type="term" value="C:cytoplasm"/>
    <property type="evidence" value="ECO:0007669"/>
    <property type="project" value="UniProtKB-SubCell"/>
</dbReference>
<dbReference type="GO" id="GO:0004814">
    <property type="term" value="F:arginine-tRNA ligase activity"/>
    <property type="evidence" value="ECO:0007669"/>
    <property type="project" value="UniProtKB-UniRule"/>
</dbReference>
<dbReference type="GO" id="GO:0005524">
    <property type="term" value="F:ATP binding"/>
    <property type="evidence" value="ECO:0007669"/>
    <property type="project" value="UniProtKB-UniRule"/>
</dbReference>
<dbReference type="GO" id="GO:0006420">
    <property type="term" value="P:arginyl-tRNA aminoacylation"/>
    <property type="evidence" value="ECO:0007669"/>
    <property type="project" value="UniProtKB-UniRule"/>
</dbReference>
<dbReference type="CDD" id="cd00671">
    <property type="entry name" value="ArgRS_core"/>
    <property type="match status" value="1"/>
</dbReference>
<dbReference type="FunFam" id="1.10.730.10:FF:000008">
    <property type="entry name" value="Arginine--tRNA ligase"/>
    <property type="match status" value="1"/>
</dbReference>
<dbReference type="FunFam" id="3.30.1360.70:FF:000003">
    <property type="entry name" value="Arginine--tRNA ligase"/>
    <property type="match status" value="1"/>
</dbReference>
<dbReference type="FunFam" id="3.40.50.620:FF:000062">
    <property type="entry name" value="Arginine--tRNA ligase"/>
    <property type="match status" value="1"/>
</dbReference>
<dbReference type="Gene3D" id="3.30.1360.70">
    <property type="entry name" value="Arginyl tRNA synthetase N-terminal domain"/>
    <property type="match status" value="1"/>
</dbReference>
<dbReference type="Gene3D" id="3.40.50.620">
    <property type="entry name" value="HUPs"/>
    <property type="match status" value="1"/>
</dbReference>
<dbReference type="Gene3D" id="1.10.730.10">
    <property type="entry name" value="Isoleucyl-tRNA Synthetase, Domain 1"/>
    <property type="match status" value="1"/>
</dbReference>
<dbReference type="HAMAP" id="MF_00123">
    <property type="entry name" value="Arg_tRNA_synth"/>
    <property type="match status" value="1"/>
</dbReference>
<dbReference type="InterPro" id="IPR001412">
    <property type="entry name" value="aa-tRNA-synth_I_CS"/>
</dbReference>
<dbReference type="InterPro" id="IPR001278">
    <property type="entry name" value="Arg-tRNA-ligase"/>
</dbReference>
<dbReference type="InterPro" id="IPR005148">
    <property type="entry name" value="Arg-tRNA-synth_N"/>
</dbReference>
<dbReference type="InterPro" id="IPR036695">
    <property type="entry name" value="Arg-tRNA-synth_N_sf"/>
</dbReference>
<dbReference type="InterPro" id="IPR035684">
    <property type="entry name" value="ArgRS_core"/>
</dbReference>
<dbReference type="InterPro" id="IPR008909">
    <property type="entry name" value="DALR_anticod-bd"/>
</dbReference>
<dbReference type="InterPro" id="IPR014729">
    <property type="entry name" value="Rossmann-like_a/b/a_fold"/>
</dbReference>
<dbReference type="InterPro" id="IPR009080">
    <property type="entry name" value="tRNAsynth_Ia_anticodon-bd"/>
</dbReference>
<dbReference type="NCBIfam" id="TIGR00456">
    <property type="entry name" value="argS"/>
    <property type="match status" value="1"/>
</dbReference>
<dbReference type="PANTHER" id="PTHR11956:SF5">
    <property type="entry name" value="ARGININE--TRNA LIGASE, CYTOPLASMIC"/>
    <property type="match status" value="1"/>
</dbReference>
<dbReference type="PANTHER" id="PTHR11956">
    <property type="entry name" value="ARGINYL-TRNA SYNTHETASE"/>
    <property type="match status" value="1"/>
</dbReference>
<dbReference type="Pfam" id="PF03485">
    <property type="entry name" value="Arg_tRNA_synt_N"/>
    <property type="match status" value="1"/>
</dbReference>
<dbReference type="Pfam" id="PF05746">
    <property type="entry name" value="DALR_1"/>
    <property type="match status" value="1"/>
</dbReference>
<dbReference type="Pfam" id="PF00750">
    <property type="entry name" value="tRNA-synt_1d"/>
    <property type="match status" value="1"/>
</dbReference>
<dbReference type="PRINTS" id="PR01038">
    <property type="entry name" value="TRNASYNTHARG"/>
</dbReference>
<dbReference type="SMART" id="SM01016">
    <property type="entry name" value="Arg_tRNA_synt_N"/>
    <property type="match status" value="1"/>
</dbReference>
<dbReference type="SMART" id="SM00836">
    <property type="entry name" value="DALR_1"/>
    <property type="match status" value="1"/>
</dbReference>
<dbReference type="SUPFAM" id="SSF47323">
    <property type="entry name" value="Anticodon-binding domain of a subclass of class I aminoacyl-tRNA synthetases"/>
    <property type="match status" value="1"/>
</dbReference>
<dbReference type="SUPFAM" id="SSF55190">
    <property type="entry name" value="Arginyl-tRNA synthetase (ArgRS), N-terminal 'additional' domain"/>
    <property type="match status" value="1"/>
</dbReference>
<dbReference type="SUPFAM" id="SSF52374">
    <property type="entry name" value="Nucleotidylyl transferase"/>
    <property type="match status" value="1"/>
</dbReference>
<dbReference type="PROSITE" id="PS00178">
    <property type="entry name" value="AA_TRNA_LIGASE_I"/>
    <property type="match status" value="1"/>
</dbReference>
<protein>
    <recommendedName>
        <fullName evidence="1">Arginine--tRNA ligase</fullName>
        <ecNumber evidence="1">6.1.1.19</ecNumber>
    </recommendedName>
    <alternativeName>
        <fullName evidence="1">Arginyl-tRNA synthetase</fullName>
        <shortName evidence="1">ArgRS</shortName>
    </alternativeName>
</protein>
<reference key="1">
    <citation type="submission" date="2007-02" db="EMBL/GenBank/DDBJ databases">
        <title>Complete sequence of Clostridium thermocellum ATCC 27405.</title>
        <authorList>
            <consortium name="US DOE Joint Genome Institute"/>
            <person name="Copeland A."/>
            <person name="Lucas S."/>
            <person name="Lapidus A."/>
            <person name="Barry K."/>
            <person name="Detter J.C."/>
            <person name="Glavina del Rio T."/>
            <person name="Hammon N."/>
            <person name="Israni S."/>
            <person name="Dalin E."/>
            <person name="Tice H."/>
            <person name="Pitluck S."/>
            <person name="Chertkov O."/>
            <person name="Brettin T."/>
            <person name="Bruce D."/>
            <person name="Han C."/>
            <person name="Tapia R."/>
            <person name="Gilna P."/>
            <person name="Schmutz J."/>
            <person name="Larimer F."/>
            <person name="Land M."/>
            <person name="Hauser L."/>
            <person name="Kyrpides N."/>
            <person name="Mikhailova N."/>
            <person name="Wu J.H.D."/>
            <person name="Newcomb M."/>
            <person name="Richardson P."/>
        </authorList>
    </citation>
    <scope>NUCLEOTIDE SEQUENCE [LARGE SCALE GENOMIC DNA]</scope>
    <source>
        <strain>ATCC 27405 / DSM 1237 / JCM 9322 / NBRC 103400 / NCIMB 10682 / NRRL B-4536 / VPI 7372</strain>
    </source>
</reference>
<keyword id="KW-0030">Aminoacyl-tRNA synthetase</keyword>
<keyword id="KW-0067">ATP-binding</keyword>
<keyword id="KW-0963">Cytoplasm</keyword>
<keyword id="KW-0436">Ligase</keyword>
<keyword id="KW-0547">Nucleotide-binding</keyword>
<keyword id="KW-0648">Protein biosynthesis</keyword>
<keyword id="KW-1185">Reference proteome</keyword>
<accession>A3DGS4</accession>
<organism>
    <name type="scientific">Acetivibrio thermocellus (strain ATCC 27405 / DSM 1237 / JCM 9322 / NBRC 103400 / NCIMB 10682 / NRRL B-4536 / VPI 7372)</name>
    <name type="common">Clostridium thermocellum</name>
    <dbReference type="NCBI Taxonomy" id="203119"/>
    <lineage>
        <taxon>Bacteria</taxon>
        <taxon>Bacillati</taxon>
        <taxon>Bacillota</taxon>
        <taxon>Clostridia</taxon>
        <taxon>Eubacteriales</taxon>
        <taxon>Oscillospiraceae</taxon>
        <taxon>Acetivibrio</taxon>
    </lineage>
</organism>
<name>SYR_ACET2</name>
<feature type="chain" id="PRO_1000018018" description="Arginine--tRNA ligase">
    <location>
        <begin position="1"/>
        <end position="564"/>
    </location>
</feature>
<feature type="short sequence motif" description="'HIGH' region">
    <location>
        <begin position="136"/>
        <end position="146"/>
    </location>
</feature>
<comment type="catalytic activity">
    <reaction evidence="1">
        <text>tRNA(Arg) + L-arginine + ATP = L-arginyl-tRNA(Arg) + AMP + diphosphate</text>
        <dbReference type="Rhea" id="RHEA:20301"/>
        <dbReference type="Rhea" id="RHEA-COMP:9658"/>
        <dbReference type="Rhea" id="RHEA-COMP:9673"/>
        <dbReference type="ChEBI" id="CHEBI:30616"/>
        <dbReference type="ChEBI" id="CHEBI:32682"/>
        <dbReference type="ChEBI" id="CHEBI:33019"/>
        <dbReference type="ChEBI" id="CHEBI:78442"/>
        <dbReference type="ChEBI" id="CHEBI:78513"/>
        <dbReference type="ChEBI" id="CHEBI:456215"/>
        <dbReference type="EC" id="6.1.1.19"/>
    </reaction>
</comment>
<comment type="subunit">
    <text evidence="1">Monomer.</text>
</comment>
<comment type="subcellular location">
    <subcellularLocation>
        <location evidence="1">Cytoplasm</location>
    </subcellularLocation>
</comment>
<comment type="similarity">
    <text evidence="1">Belongs to the class-I aminoacyl-tRNA synthetase family.</text>
</comment>